<feature type="chain" id="PRO_0000304374" description="1-aminocyclopropane-1-carboxylate deaminase">
    <location>
        <begin position="1"/>
        <end position="338"/>
    </location>
</feature>
<feature type="active site" description="Nucleophile" evidence="1">
    <location>
        <position position="78"/>
    </location>
</feature>
<feature type="modified residue" description="N6-(pyridoxal phosphate)lysine" evidence="1">
    <location>
        <position position="51"/>
    </location>
</feature>
<organism>
    <name type="scientific">Burkholderia pseudomallei (strain 1710b)</name>
    <dbReference type="NCBI Taxonomy" id="320372"/>
    <lineage>
        <taxon>Bacteria</taxon>
        <taxon>Pseudomonadati</taxon>
        <taxon>Pseudomonadota</taxon>
        <taxon>Betaproteobacteria</taxon>
        <taxon>Burkholderiales</taxon>
        <taxon>Burkholderiaceae</taxon>
        <taxon>Burkholderia</taxon>
        <taxon>pseudomallei group</taxon>
    </lineage>
</organism>
<sequence length="338" mass="36491">MNLQKFPRYPLTFGPTPIQPLKRLSAHLGGKVELYAKRDDCNSGLAFGGNKTRKLEYLIPDALAQGCDTLVSIGGIQSNQTRQVAAVAAHLGMKCVLVQENWVNYHDAVYDRVGNIQMSRMMGADVRLVPDGFDIGFRKSWEDALADVRARGGKPYAIPAGCSDHPLGGLGFVGFAEEVRAQEAELGFQFDYVVVCSVTGSTQAGMVVGFAADGRADRVIGVDASAKPAQTREQILRIAKHTADRVELGRDITSADVVLDERFGGPEYGLPNEGTLEAIRLCAKLEGVLTDPVYEGKSMHGMIEKVRLGEFPAGSKVLYAHLGGVPALNAYSFLFRDG</sequence>
<accession>Q3JLQ0</accession>
<gene>
    <name evidence="1" type="primary">acdS</name>
    <name type="ordered locus">BURPS1710b_A0344</name>
</gene>
<proteinExistence type="inferred from homology"/>
<dbReference type="EC" id="3.5.99.7" evidence="1"/>
<dbReference type="EMBL" id="CP000125">
    <property type="protein sequence ID" value="ABA51522.1"/>
    <property type="molecule type" value="Genomic_DNA"/>
</dbReference>
<dbReference type="RefSeq" id="WP_004524261.1">
    <property type="nucleotide sequence ID" value="NC_007435.1"/>
</dbReference>
<dbReference type="SMR" id="Q3JLQ0"/>
<dbReference type="EnsemblBacteria" id="ABA51522">
    <property type="protein sequence ID" value="ABA51522"/>
    <property type="gene ID" value="BURPS1710b_A0344"/>
</dbReference>
<dbReference type="KEGG" id="bpm:BURPS1710b_A0344"/>
<dbReference type="HOGENOM" id="CLU_048897_2_1_4"/>
<dbReference type="Proteomes" id="UP000002700">
    <property type="component" value="Chromosome II"/>
</dbReference>
<dbReference type="GO" id="GO:0008660">
    <property type="term" value="F:1-aminocyclopropane-1-carboxylate deaminase activity"/>
    <property type="evidence" value="ECO:0007669"/>
    <property type="project" value="UniProtKB-UniRule"/>
</dbReference>
<dbReference type="GO" id="GO:0019148">
    <property type="term" value="F:D-cysteine desulfhydrase activity"/>
    <property type="evidence" value="ECO:0007669"/>
    <property type="project" value="TreeGrafter"/>
</dbReference>
<dbReference type="GO" id="GO:0030170">
    <property type="term" value="F:pyridoxal phosphate binding"/>
    <property type="evidence" value="ECO:0007669"/>
    <property type="project" value="InterPro"/>
</dbReference>
<dbReference type="GO" id="GO:0018871">
    <property type="term" value="P:1-aminocyclopropane-1-carboxylate metabolic process"/>
    <property type="evidence" value="ECO:0007669"/>
    <property type="project" value="UniProtKB-UniRule"/>
</dbReference>
<dbReference type="GO" id="GO:0009310">
    <property type="term" value="P:amine catabolic process"/>
    <property type="evidence" value="ECO:0007669"/>
    <property type="project" value="InterPro"/>
</dbReference>
<dbReference type="CDD" id="cd06449">
    <property type="entry name" value="ACCD"/>
    <property type="match status" value="1"/>
</dbReference>
<dbReference type="FunFam" id="3.40.50.1100:FF:000053">
    <property type="entry name" value="1-aminocyclopropane-1-carboxylate deaminase"/>
    <property type="match status" value="1"/>
</dbReference>
<dbReference type="Gene3D" id="3.40.50.1100">
    <property type="match status" value="2"/>
</dbReference>
<dbReference type="HAMAP" id="MF_00807">
    <property type="entry name" value="ACC_deaminase"/>
    <property type="match status" value="1"/>
</dbReference>
<dbReference type="InterPro" id="IPR027278">
    <property type="entry name" value="ACCD_DCysDesulf"/>
</dbReference>
<dbReference type="InterPro" id="IPR005965">
    <property type="entry name" value="ACP_carboxylate_deaminase"/>
</dbReference>
<dbReference type="InterPro" id="IPR020601">
    <property type="entry name" value="ACP_carboxylate_deaminase_bac"/>
</dbReference>
<dbReference type="InterPro" id="IPR001926">
    <property type="entry name" value="TrpB-like_PALP"/>
</dbReference>
<dbReference type="InterPro" id="IPR036052">
    <property type="entry name" value="TrpB-like_PALP_sf"/>
</dbReference>
<dbReference type="NCBIfam" id="TIGR01274">
    <property type="entry name" value="ACC_deam"/>
    <property type="match status" value="1"/>
</dbReference>
<dbReference type="PANTHER" id="PTHR43780">
    <property type="entry name" value="1-AMINOCYCLOPROPANE-1-CARBOXYLATE DEAMINASE-RELATED"/>
    <property type="match status" value="1"/>
</dbReference>
<dbReference type="PANTHER" id="PTHR43780:SF2">
    <property type="entry name" value="1-AMINOCYCLOPROPANE-1-CARBOXYLATE DEAMINASE-RELATED"/>
    <property type="match status" value="1"/>
</dbReference>
<dbReference type="Pfam" id="PF00291">
    <property type="entry name" value="PALP"/>
    <property type="match status" value="1"/>
</dbReference>
<dbReference type="PIRSF" id="PIRSF006278">
    <property type="entry name" value="ACCD_DCysDesulf"/>
    <property type="match status" value="1"/>
</dbReference>
<dbReference type="SUPFAM" id="SSF53686">
    <property type="entry name" value="Tryptophan synthase beta subunit-like PLP-dependent enzymes"/>
    <property type="match status" value="1"/>
</dbReference>
<comment type="function">
    <text evidence="1">Catalyzes a cyclopropane ring-opening reaction, the irreversible conversion of 1-aminocyclopropane-1-carboxylate (ACC) to ammonia and alpha-ketobutyrate. Allows growth on ACC as a nitrogen source.</text>
</comment>
<comment type="catalytic activity">
    <reaction evidence="1">
        <text>1-aminocyclopropane-1-carboxylate + H2O = 2-oxobutanoate + NH4(+)</text>
        <dbReference type="Rhea" id="RHEA:16933"/>
        <dbReference type="ChEBI" id="CHEBI:15377"/>
        <dbReference type="ChEBI" id="CHEBI:16763"/>
        <dbReference type="ChEBI" id="CHEBI:28938"/>
        <dbReference type="ChEBI" id="CHEBI:58360"/>
        <dbReference type="EC" id="3.5.99.7"/>
    </reaction>
</comment>
<comment type="cofactor">
    <cofactor evidence="1">
        <name>pyridoxal 5'-phosphate</name>
        <dbReference type="ChEBI" id="CHEBI:597326"/>
    </cofactor>
</comment>
<comment type="subunit">
    <text evidence="1">Homotrimer.</text>
</comment>
<comment type="similarity">
    <text evidence="1">Belongs to the ACC deaminase/D-cysteine desulfhydrase family.</text>
</comment>
<name>1A1D_BURP1</name>
<evidence type="ECO:0000255" key="1">
    <source>
        <dbReference type="HAMAP-Rule" id="MF_00807"/>
    </source>
</evidence>
<keyword id="KW-0378">Hydrolase</keyword>
<keyword id="KW-0663">Pyridoxal phosphate</keyword>
<protein>
    <recommendedName>
        <fullName evidence="1">1-aminocyclopropane-1-carboxylate deaminase</fullName>
        <shortName evidence="1">ACC deaminase</shortName>
        <shortName evidence="1">ACCD</shortName>
        <ecNumber evidence="1">3.5.99.7</ecNumber>
    </recommendedName>
</protein>
<reference key="1">
    <citation type="journal article" date="2010" name="Genome Biol. Evol.">
        <title>Continuing evolution of Burkholderia mallei through genome reduction and large-scale rearrangements.</title>
        <authorList>
            <person name="Losada L."/>
            <person name="Ronning C.M."/>
            <person name="DeShazer D."/>
            <person name="Woods D."/>
            <person name="Fedorova N."/>
            <person name="Kim H.S."/>
            <person name="Shabalina S.A."/>
            <person name="Pearson T.R."/>
            <person name="Brinkac L."/>
            <person name="Tan P."/>
            <person name="Nandi T."/>
            <person name="Crabtree J."/>
            <person name="Badger J."/>
            <person name="Beckstrom-Sternberg S."/>
            <person name="Saqib M."/>
            <person name="Schutzer S.E."/>
            <person name="Keim P."/>
            <person name="Nierman W.C."/>
        </authorList>
    </citation>
    <scope>NUCLEOTIDE SEQUENCE [LARGE SCALE GENOMIC DNA]</scope>
    <source>
        <strain>1710b</strain>
    </source>
</reference>